<evidence type="ECO:0000255" key="1">
    <source>
        <dbReference type="HAMAP-Rule" id="MF_01152"/>
    </source>
</evidence>
<name>DNAJ_BACAA</name>
<dbReference type="EMBL" id="CP001598">
    <property type="protein sequence ID" value="ACQ49835.1"/>
    <property type="molecule type" value="Genomic_DNA"/>
</dbReference>
<dbReference type="RefSeq" id="WP_000043938.1">
    <property type="nucleotide sequence ID" value="NC_012659.1"/>
</dbReference>
<dbReference type="SMR" id="C3P8L9"/>
<dbReference type="GeneID" id="45024190"/>
<dbReference type="KEGG" id="bai:BAA_4557"/>
<dbReference type="HOGENOM" id="CLU_017633_0_7_9"/>
<dbReference type="GO" id="GO:0005737">
    <property type="term" value="C:cytoplasm"/>
    <property type="evidence" value="ECO:0007669"/>
    <property type="project" value="UniProtKB-SubCell"/>
</dbReference>
<dbReference type="GO" id="GO:0005524">
    <property type="term" value="F:ATP binding"/>
    <property type="evidence" value="ECO:0007669"/>
    <property type="project" value="InterPro"/>
</dbReference>
<dbReference type="GO" id="GO:0031072">
    <property type="term" value="F:heat shock protein binding"/>
    <property type="evidence" value="ECO:0007669"/>
    <property type="project" value="InterPro"/>
</dbReference>
<dbReference type="GO" id="GO:0051082">
    <property type="term" value="F:unfolded protein binding"/>
    <property type="evidence" value="ECO:0007669"/>
    <property type="project" value="UniProtKB-UniRule"/>
</dbReference>
<dbReference type="GO" id="GO:0008270">
    <property type="term" value="F:zinc ion binding"/>
    <property type="evidence" value="ECO:0007669"/>
    <property type="project" value="UniProtKB-UniRule"/>
</dbReference>
<dbReference type="GO" id="GO:0051085">
    <property type="term" value="P:chaperone cofactor-dependent protein refolding"/>
    <property type="evidence" value="ECO:0007669"/>
    <property type="project" value="TreeGrafter"/>
</dbReference>
<dbReference type="GO" id="GO:0006260">
    <property type="term" value="P:DNA replication"/>
    <property type="evidence" value="ECO:0007669"/>
    <property type="project" value="UniProtKB-KW"/>
</dbReference>
<dbReference type="GO" id="GO:0042026">
    <property type="term" value="P:protein refolding"/>
    <property type="evidence" value="ECO:0007669"/>
    <property type="project" value="TreeGrafter"/>
</dbReference>
<dbReference type="GO" id="GO:0009408">
    <property type="term" value="P:response to heat"/>
    <property type="evidence" value="ECO:0007669"/>
    <property type="project" value="InterPro"/>
</dbReference>
<dbReference type="CDD" id="cd06257">
    <property type="entry name" value="DnaJ"/>
    <property type="match status" value="1"/>
</dbReference>
<dbReference type="CDD" id="cd10747">
    <property type="entry name" value="DnaJ_C"/>
    <property type="match status" value="1"/>
</dbReference>
<dbReference type="CDD" id="cd10719">
    <property type="entry name" value="DnaJ_zf"/>
    <property type="match status" value="1"/>
</dbReference>
<dbReference type="FunFam" id="1.10.287.110:FF:000031">
    <property type="entry name" value="Molecular chaperone DnaJ"/>
    <property type="match status" value="1"/>
</dbReference>
<dbReference type="FunFam" id="2.60.260.20:FF:000004">
    <property type="entry name" value="Molecular chaperone DnaJ"/>
    <property type="match status" value="1"/>
</dbReference>
<dbReference type="FunFam" id="2.60.260.20:FF:000009">
    <property type="entry name" value="Putative Mitochondrial DnaJ chaperone"/>
    <property type="match status" value="1"/>
</dbReference>
<dbReference type="Gene3D" id="6.20.20.10">
    <property type="match status" value="2"/>
</dbReference>
<dbReference type="Gene3D" id="1.10.287.110">
    <property type="entry name" value="DnaJ domain"/>
    <property type="match status" value="1"/>
</dbReference>
<dbReference type="Gene3D" id="2.60.260.20">
    <property type="entry name" value="Urease metallochaperone UreE, N-terminal domain"/>
    <property type="match status" value="2"/>
</dbReference>
<dbReference type="HAMAP" id="MF_01152">
    <property type="entry name" value="DnaJ"/>
    <property type="match status" value="1"/>
</dbReference>
<dbReference type="InterPro" id="IPR012724">
    <property type="entry name" value="DnaJ"/>
</dbReference>
<dbReference type="InterPro" id="IPR002939">
    <property type="entry name" value="DnaJ_C"/>
</dbReference>
<dbReference type="InterPro" id="IPR001623">
    <property type="entry name" value="DnaJ_domain"/>
</dbReference>
<dbReference type="InterPro" id="IPR018253">
    <property type="entry name" value="DnaJ_domain_CS"/>
</dbReference>
<dbReference type="InterPro" id="IPR008971">
    <property type="entry name" value="HSP40/DnaJ_pept-bd"/>
</dbReference>
<dbReference type="InterPro" id="IPR001305">
    <property type="entry name" value="HSP_DnaJ_Cys-rich_dom"/>
</dbReference>
<dbReference type="InterPro" id="IPR036410">
    <property type="entry name" value="HSP_DnaJ_Cys-rich_dom_sf"/>
</dbReference>
<dbReference type="InterPro" id="IPR036869">
    <property type="entry name" value="J_dom_sf"/>
</dbReference>
<dbReference type="NCBIfam" id="TIGR02349">
    <property type="entry name" value="DnaJ_bact"/>
    <property type="match status" value="1"/>
</dbReference>
<dbReference type="NCBIfam" id="NF008035">
    <property type="entry name" value="PRK10767.1"/>
    <property type="match status" value="1"/>
</dbReference>
<dbReference type="NCBIfam" id="NF010873">
    <property type="entry name" value="PRK14280.1"/>
    <property type="match status" value="1"/>
</dbReference>
<dbReference type="PANTHER" id="PTHR43096:SF48">
    <property type="entry name" value="CHAPERONE PROTEIN DNAJ"/>
    <property type="match status" value="1"/>
</dbReference>
<dbReference type="PANTHER" id="PTHR43096">
    <property type="entry name" value="DNAJ HOMOLOG 1, MITOCHONDRIAL-RELATED"/>
    <property type="match status" value="1"/>
</dbReference>
<dbReference type="Pfam" id="PF00226">
    <property type="entry name" value="DnaJ"/>
    <property type="match status" value="1"/>
</dbReference>
<dbReference type="Pfam" id="PF01556">
    <property type="entry name" value="DnaJ_C"/>
    <property type="match status" value="1"/>
</dbReference>
<dbReference type="Pfam" id="PF00684">
    <property type="entry name" value="DnaJ_CXXCXGXG"/>
    <property type="match status" value="1"/>
</dbReference>
<dbReference type="PRINTS" id="PR00625">
    <property type="entry name" value="JDOMAIN"/>
</dbReference>
<dbReference type="SMART" id="SM00271">
    <property type="entry name" value="DnaJ"/>
    <property type="match status" value="1"/>
</dbReference>
<dbReference type="SUPFAM" id="SSF46565">
    <property type="entry name" value="Chaperone J-domain"/>
    <property type="match status" value="1"/>
</dbReference>
<dbReference type="SUPFAM" id="SSF57938">
    <property type="entry name" value="DnaJ/Hsp40 cysteine-rich domain"/>
    <property type="match status" value="1"/>
</dbReference>
<dbReference type="SUPFAM" id="SSF49493">
    <property type="entry name" value="HSP40/DnaJ peptide-binding domain"/>
    <property type="match status" value="2"/>
</dbReference>
<dbReference type="PROSITE" id="PS00636">
    <property type="entry name" value="DNAJ_1"/>
    <property type="match status" value="1"/>
</dbReference>
<dbReference type="PROSITE" id="PS50076">
    <property type="entry name" value="DNAJ_2"/>
    <property type="match status" value="1"/>
</dbReference>
<dbReference type="PROSITE" id="PS51188">
    <property type="entry name" value="ZF_CR"/>
    <property type="match status" value="1"/>
</dbReference>
<organism>
    <name type="scientific">Bacillus anthracis (strain A0248)</name>
    <dbReference type="NCBI Taxonomy" id="592021"/>
    <lineage>
        <taxon>Bacteria</taxon>
        <taxon>Bacillati</taxon>
        <taxon>Bacillota</taxon>
        <taxon>Bacilli</taxon>
        <taxon>Bacillales</taxon>
        <taxon>Bacillaceae</taxon>
        <taxon>Bacillus</taxon>
        <taxon>Bacillus cereus group</taxon>
    </lineage>
</organism>
<protein>
    <recommendedName>
        <fullName evidence="1">Chaperone protein DnaJ</fullName>
    </recommendedName>
</protein>
<keyword id="KW-0143">Chaperone</keyword>
<keyword id="KW-0963">Cytoplasm</keyword>
<keyword id="KW-0235">DNA replication</keyword>
<keyword id="KW-0479">Metal-binding</keyword>
<keyword id="KW-0677">Repeat</keyword>
<keyword id="KW-0346">Stress response</keyword>
<keyword id="KW-0862">Zinc</keyword>
<keyword id="KW-0863">Zinc-finger</keyword>
<proteinExistence type="inferred from homology"/>
<feature type="chain" id="PRO_1000164238" description="Chaperone protein DnaJ">
    <location>
        <begin position="1"/>
        <end position="371"/>
    </location>
</feature>
<feature type="domain" description="J" evidence="1">
    <location>
        <begin position="5"/>
        <end position="69"/>
    </location>
</feature>
<feature type="repeat" description="CXXCXGXG motif">
    <location>
        <begin position="146"/>
        <end position="153"/>
    </location>
</feature>
<feature type="repeat" description="CXXCXGXG motif">
    <location>
        <begin position="163"/>
        <end position="170"/>
    </location>
</feature>
<feature type="repeat" description="CXXCXGXG motif">
    <location>
        <begin position="189"/>
        <end position="196"/>
    </location>
</feature>
<feature type="repeat" description="CXXCXGXG motif">
    <location>
        <begin position="203"/>
        <end position="210"/>
    </location>
</feature>
<feature type="zinc finger region" description="CR-type" evidence="1">
    <location>
        <begin position="133"/>
        <end position="215"/>
    </location>
</feature>
<feature type="binding site" evidence="1">
    <location>
        <position position="146"/>
    </location>
    <ligand>
        <name>Zn(2+)</name>
        <dbReference type="ChEBI" id="CHEBI:29105"/>
        <label>1</label>
    </ligand>
</feature>
<feature type="binding site" evidence="1">
    <location>
        <position position="149"/>
    </location>
    <ligand>
        <name>Zn(2+)</name>
        <dbReference type="ChEBI" id="CHEBI:29105"/>
        <label>1</label>
    </ligand>
</feature>
<feature type="binding site" evidence="1">
    <location>
        <position position="163"/>
    </location>
    <ligand>
        <name>Zn(2+)</name>
        <dbReference type="ChEBI" id="CHEBI:29105"/>
        <label>2</label>
    </ligand>
</feature>
<feature type="binding site" evidence="1">
    <location>
        <position position="166"/>
    </location>
    <ligand>
        <name>Zn(2+)</name>
        <dbReference type="ChEBI" id="CHEBI:29105"/>
        <label>2</label>
    </ligand>
</feature>
<feature type="binding site" evidence="1">
    <location>
        <position position="189"/>
    </location>
    <ligand>
        <name>Zn(2+)</name>
        <dbReference type="ChEBI" id="CHEBI:29105"/>
        <label>2</label>
    </ligand>
</feature>
<feature type="binding site" evidence="1">
    <location>
        <position position="192"/>
    </location>
    <ligand>
        <name>Zn(2+)</name>
        <dbReference type="ChEBI" id="CHEBI:29105"/>
        <label>2</label>
    </ligand>
</feature>
<feature type="binding site" evidence="1">
    <location>
        <position position="203"/>
    </location>
    <ligand>
        <name>Zn(2+)</name>
        <dbReference type="ChEBI" id="CHEBI:29105"/>
        <label>1</label>
    </ligand>
</feature>
<feature type="binding site" evidence="1">
    <location>
        <position position="206"/>
    </location>
    <ligand>
        <name>Zn(2+)</name>
        <dbReference type="ChEBI" id="CHEBI:29105"/>
        <label>1</label>
    </ligand>
</feature>
<accession>C3P8L9</accession>
<gene>
    <name evidence="1" type="primary">dnaJ</name>
    <name type="ordered locus">BAA_4557</name>
</gene>
<comment type="function">
    <text evidence="1">Participates actively in the response to hyperosmotic and heat shock by preventing the aggregation of stress-denatured proteins and by disaggregating proteins, also in an autonomous, DnaK-independent fashion. Unfolded proteins bind initially to DnaJ; upon interaction with the DnaJ-bound protein, DnaK hydrolyzes its bound ATP, resulting in the formation of a stable complex. GrpE releases ADP from DnaK; ATP binding to DnaK triggers the release of the substrate protein, thus completing the reaction cycle. Several rounds of ATP-dependent interactions between DnaJ, DnaK and GrpE are required for fully efficient folding. Also involved, together with DnaK and GrpE, in the DNA replication of plasmids through activation of initiation proteins.</text>
</comment>
<comment type="cofactor">
    <cofactor evidence="1">
        <name>Zn(2+)</name>
        <dbReference type="ChEBI" id="CHEBI:29105"/>
    </cofactor>
    <text evidence="1">Binds 2 Zn(2+) ions per monomer.</text>
</comment>
<comment type="subunit">
    <text evidence="1">Homodimer.</text>
</comment>
<comment type="subcellular location">
    <subcellularLocation>
        <location evidence="1">Cytoplasm</location>
    </subcellularLocation>
</comment>
<comment type="domain">
    <text evidence="1">The J domain is necessary and sufficient to stimulate DnaK ATPase activity. Zinc center 1 plays an important role in the autonomous, DnaK-independent chaperone activity of DnaJ. Zinc center 2 is essential for interaction with DnaK and for DnaJ activity.</text>
</comment>
<comment type="similarity">
    <text evidence="1">Belongs to the DnaJ family.</text>
</comment>
<sequence length="371" mass="40363">MSKRDYYEVLGLSKGASKDEIKKAYRRLAKKYHPDVSKEENAIEKFKEVQEAYEVLSDDQKRAQYDQFGHAGANQGFGGFGGGGDFGGGFGFEDIFSSFFGGGGGRRRDPNAPRQGADLQYQVTLEFEEAIFGKELNVEIPVEDPCDTCKGSGAKPGTSKETCKHCSGSGQVSVEQNTPFGRIVNRQACSHCSGTGQMIKEKCTTCHGSGKVRKRKKINVKIPAGIDNGQQIRVSGKGEAGVNGGPAGDLYVVVHVRSHEFFEREGDHIICEMPLTFAQMALGAEVEVPTVHGKVKLKIPAGTQTGTEFRLKGKGAPNVRGYGQGDQYVVVRVVVPTKLTSHQKDLLREFAGQEEQDDSLFGKLKRAFKGE</sequence>
<reference key="1">
    <citation type="submission" date="2009-04" db="EMBL/GenBank/DDBJ databases">
        <title>Genome sequence of Bacillus anthracis A0248.</title>
        <authorList>
            <person name="Dodson R.J."/>
            <person name="Munk A.C."/>
            <person name="Bruce D."/>
            <person name="Detter C."/>
            <person name="Tapia R."/>
            <person name="Sutton G."/>
            <person name="Sims D."/>
            <person name="Brettin T."/>
        </authorList>
    </citation>
    <scope>NUCLEOTIDE SEQUENCE [LARGE SCALE GENOMIC DNA]</scope>
    <source>
        <strain>A0248</strain>
    </source>
</reference>